<comment type="similarity">
    <text evidence="1">Belongs to the UPF0232 family.</text>
</comment>
<sequence>MTGSVDRPDQNRGERLMKSPGLDLVRRTLDEARAAARARGQDAGRGRVASVASGRVAGRRRSWSGPGPDIRDPQPLGKAARELAKKRGWSVRVAEGMVLGQWSAVVGHQIAEHARPTALNDGVLSVIAESTAWATQLRIMQAQLLAKIAAAVGNDVVRSLKITGPAAPSWRKGPRHIAGRGPRDTYG</sequence>
<accession>Q7U313</accession>
<accession>A0A1R3XU16</accession>
<accession>X2BDR3</accession>
<dbReference type="EMBL" id="LT708304">
    <property type="protein sequence ID" value="SIT98341.1"/>
    <property type="molecule type" value="Genomic_DNA"/>
</dbReference>
<dbReference type="RefSeq" id="NP_853674.1">
    <property type="nucleotide sequence ID" value="NC_002945.3"/>
</dbReference>
<dbReference type="RefSeq" id="WP_010950322.1">
    <property type="nucleotide sequence ID" value="NC_002945.4"/>
</dbReference>
<dbReference type="SMR" id="Q7U313"/>
<dbReference type="KEGG" id="mbo:BQ2027_MB0004"/>
<dbReference type="PATRIC" id="fig|233413.5.peg.4"/>
<dbReference type="Proteomes" id="UP000001419">
    <property type="component" value="Chromosome"/>
</dbReference>
<dbReference type="HAMAP" id="MF_00630">
    <property type="entry name" value="UPF0232"/>
    <property type="match status" value="1"/>
</dbReference>
<dbReference type="InterPro" id="IPR007922">
    <property type="entry name" value="DciA-like"/>
</dbReference>
<dbReference type="InterPro" id="IPR023007">
    <property type="entry name" value="UPF0232_actinobac"/>
</dbReference>
<dbReference type="NCBIfam" id="NF002871">
    <property type="entry name" value="PRK03195.1"/>
    <property type="match status" value="1"/>
</dbReference>
<dbReference type="PANTHER" id="PTHR36456">
    <property type="entry name" value="UPF0232 PROTEIN SCO3875"/>
    <property type="match status" value="1"/>
</dbReference>
<dbReference type="PANTHER" id="PTHR36456:SF1">
    <property type="entry name" value="UPF0232 PROTEIN SCO3875"/>
    <property type="match status" value="1"/>
</dbReference>
<dbReference type="Pfam" id="PF05258">
    <property type="entry name" value="DciA"/>
    <property type="match status" value="1"/>
</dbReference>
<name>Y004_MYCBO</name>
<gene>
    <name type="ordered locus">BQ2027_MB0004</name>
</gene>
<organism>
    <name type="scientific">Mycobacterium bovis (strain ATCC BAA-935 / AF2122/97)</name>
    <dbReference type="NCBI Taxonomy" id="233413"/>
    <lineage>
        <taxon>Bacteria</taxon>
        <taxon>Bacillati</taxon>
        <taxon>Actinomycetota</taxon>
        <taxon>Actinomycetes</taxon>
        <taxon>Mycobacteriales</taxon>
        <taxon>Mycobacteriaceae</taxon>
        <taxon>Mycobacterium</taxon>
        <taxon>Mycobacterium tuberculosis complex</taxon>
    </lineage>
</organism>
<evidence type="ECO:0000255" key="1">
    <source>
        <dbReference type="HAMAP-Rule" id="MF_00630"/>
    </source>
</evidence>
<evidence type="ECO:0000256" key="2">
    <source>
        <dbReference type="SAM" id="MobiDB-lite"/>
    </source>
</evidence>
<reference key="1">
    <citation type="journal article" date="2003" name="Proc. Natl. Acad. Sci. U.S.A.">
        <title>The complete genome sequence of Mycobacterium bovis.</title>
        <authorList>
            <person name="Garnier T."/>
            <person name="Eiglmeier K."/>
            <person name="Camus J.-C."/>
            <person name="Medina N."/>
            <person name="Mansoor H."/>
            <person name="Pryor M."/>
            <person name="Duthoy S."/>
            <person name="Grondin S."/>
            <person name="Lacroix C."/>
            <person name="Monsempe C."/>
            <person name="Simon S."/>
            <person name="Harris B."/>
            <person name="Atkin R."/>
            <person name="Doggett J."/>
            <person name="Mayes R."/>
            <person name="Keating L."/>
            <person name="Wheeler P.R."/>
            <person name="Parkhill J."/>
            <person name="Barrell B.G."/>
            <person name="Cole S.T."/>
            <person name="Gordon S.V."/>
            <person name="Hewinson R.G."/>
        </authorList>
    </citation>
    <scope>NUCLEOTIDE SEQUENCE [LARGE SCALE GENOMIC DNA]</scope>
    <source>
        <strain>ATCC BAA-935 / AF2122/97</strain>
    </source>
</reference>
<reference key="2">
    <citation type="journal article" date="2017" name="Genome Announc.">
        <title>Updated reference genome sequence and annotation of Mycobacterium bovis AF2122/97.</title>
        <authorList>
            <person name="Malone K.M."/>
            <person name="Farrell D."/>
            <person name="Stuber T.P."/>
            <person name="Schubert O.T."/>
            <person name="Aebersold R."/>
            <person name="Robbe-Austerman S."/>
            <person name="Gordon S.V."/>
        </authorList>
    </citation>
    <scope>NUCLEOTIDE SEQUENCE [LARGE SCALE GENOMIC DNA]</scope>
    <scope>GENOME REANNOTATION</scope>
    <source>
        <strain>ATCC BAA-935 / AF2122/97</strain>
    </source>
</reference>
<feature type="chain" id="PRO_0000211361" description="UPF0232 protein Mb0004">
    <location>
        <begin position="1"/>
        <end position="187"/>
    </location>
</feature>
<feature type="region of interest" description="Disordered" evidence="2">
    <location>
        <begin position="1"/>
        <end position="23"/>
    </location>
</feature>
<feature type="region of interest" description="Disordered" evidence="2">
    <location>
        <begin position="35"/>
        <end position="75"/>
    </location>
</feature>
<feature type="region of interest" description="Disordered" evidence="2">
    <location>
        <begin position="168"/>
        <end position="187"/>
    </location>
</feature>
<feature type="compositionally biased region" description="Basic and acidic residues" evidence="2">
    <location>
        <begin position="1"/>
        <end position="17"/>
    </location>
</feature>
<feature type="compositionally biased region" description="Basic and acidic residues" evidence="2">
    <location>
        <begin position="35"/>
        <end position="45"/>
    </location>
</feature>
<keyword id="KW-1185">Reference proteome</keyword>
<protein>
    <recommendedName>
        <fullName evidence="1">UPF0232 protein Mb0004</fullName>
    </recommendedName>
</protein>
<proteinExistence type="inferred from homology"/>